<feature type="chain" id="PRO_1000077236" description="6,7-dimethyl-8-ribityllumazine synthase">
    <location>
        <begin position="1"/>
        <end position="157"/>
    </location>
</feature>
<feature type="active site" description="Proton donor" evidence="1">
    <location>
        <position position="89"/>
    </location>
</feature>
<feature type="binding site" evidence="1">
    <location>
        <position position="22"/>
    </location>
    <ligand>
        <name>5-amino-6-(D-ribitylamino)uracil</name>
        <dbReference type="ChEBI" id="CHEBI:15934"/>
    </ligand>
</feature>
<feature type="binding site" evidence="1">
    <location>
        <begin position="57"/>
        <end position="59"/>
    </location>
    <ligand>
        <name>5-amino-6-(D-ribitylamino)uracil</name>
        <dbReference type="ChEBI" id="CHEBI:15934"/>
    </ligand>
</feature>
<feature type="binding site" evidence="1">
    <location>
        <begin position="81"/>
        <end position="83"/>
    </location>
    <ligand>
        <name>5-amino-6-(D-ribitylamino)uracil</name>
        <dbReference type="ChEBI" id="CHEBI:15934"/>
    </ligand>
</feature>
<feature type="binding site" evidence="1">
    <location>
        <begin position="86"/>
        <end position="87"/>
    </location>
    <ligand>
        <name>(2S)-2-hydroxy-3-oxobutyl phosphate</name>
        <dbReference type="ChEBI" id="CHEBI:58830"/>
    </ligand>
</feature>
<feature type="binding site" evidence="1">
    <location>
        <position position="114"/>
    </location>
    <ligand>
        <name>5-amino-6-(D-ribitylamino)uracil</name>
        <dbReference type="ChEBI" id="CHEBI:15934"/>
    </ligand>
</feature>
<feature type="binding site" evidence="1">
    <location>
        <position position="128"/>
    </location>
    <ligand>
        <name>(2S)-2-hydroxy-3-oxobutyl phosphate</name>
        <dbReference type="ChEBI" id="CHEBI:58830"/>
    </ligand>
</feature>
<dbReference type="EC" id="2.5.1.78" evidence="1"/>
<dbReference type="EMBL" id="CP000947">
    <property type="protein sequence ID" value="ACA31030.1"/>
    <property type="molecule type" value="Genomic_DNA"/>
</dbReference>
<dbReference type="RefSeq" id="WP_011608983.1">
    <property type="nucleotide sequence ID" value="NC_010519.1"/>
</dbReference>
<dbReference type="SMR" id="B0UU22"/>
<dbReference type="STRING" id="228400.HSM_1299"/>
<dbReference type="GeneID" id="31487602"/>
<dbReference type="KEGG" id="hsm:HSM_1299"/>
<dbReference type="HOGENOM" id="CLU_089358_1_1_6"/>
<dbReference type="UniPathway" id="UPA00275">
    <property type="reaction ID" value="UER00404"/>
</dbReference>
<dbReference type="GO" id="GO:0005829">
    <property type="term" value="C:cytosol"/>
    <property type="evidence" value="ECO:0007669"/>
    <property type="project" value="TreeGrafter"/>
</dbReference>
<dbReference type="GO" id="GO:0009349">
    <property type="term" value="C:riboflavin synthase complex"/>
    <property type="evidence" value="ECO:0007669"/>
    <property type="project" value="InterPro"/>
</dbReference>
<dbReference type="GO" id="GO:0000906">
    <property type="term" value="F:6,7-dimethyl-8-ribityllumazine synthase activity"/>
    <property type="evidence" value="ECO:0007669"/>
    <property type="project" value="UniProtKB-UniRule"/>
</dbReference>
<dbReference type="GO" id="GO:0009231">
    <property type="term" value="P:riboflavin biosynthetic process"/>
    <property type="evidence" value="ECO:0007669"/>
    <property type="project" value="UniProtKB-UniRule"/>
</dbReference>
<dbReference type="CDD" id="cd09209">
    <property type="entry name" value="Lumazine_synthase-I"/>
    <property type="match status" value="1"/>
</dbReference>
<dbReference type="FunFam" id="3.40.50.960:FF:000001">
    <property type="entry name" value="6,7-dimethyl-8-ribityllumazine synthase"/>
    <property type="match status" value="1"/>
</dbReference>
<dbReference type="Gene3D" id="3.40.50.960">
    <property type="entry name" value="Lumazine/riboflavin synthase"/>
    <property type="match status" value="1"/>
</dbReference>
<dbReference type="HAMAP" id="MF_00178">
    <property type="entry name" value="Lumazine_synth"/>
    <property type="match status" value="1"/>
</dbReference>
<dbReference type="InterPro" id="IPR034964">
    <property type="entry name" value="LS"/>
</dbReference>
<dbReference type="InterPro" id="IPR002180">
    <property type="entry name" value="LS/RS"/>
</dbReference>
<dbReference type="InterPro" id="IPR036467">
    <property type="entry name" value="LS/RS_sf"/>
</dbReference>
<dbReference type="NCBIfam" id="TIGR00114">
    <property type="entry name" value="lumazine-synth"/>
    <property type="match status" value="1"/>
</dbReference>
<dbReference type="NCBIfam" id="NF000812">
    <property type="entry name" value="PRK00061.1-4"/>
    <property type="match status" value="1"/>
</dbReference>
<dbReference type="PANTHER" id="PTHR21058:SF0">
    <property type="entry name" value="6,7-DIMETHYL-8-RIBITYLLUMAZINE SYNTHASE"/>
    <property type="match status" value="1"/>
</dbReference>
<dbReference type="PANTHER" id="PTHR21058">
    <property type="entry name" value="6,7-DIMETHYL-8-RIBITYLLUMAZINE SYNTHASE DMRL SYNTHASE LUMAZINE SYNTHASE"/>
    <property type="match status" value="1"/>
</dbReference>
<dbReference type="Pfam" id="PF00885">
    <property type="entry name" value="DMRL_synthase"/>
    <property type="match status" value="1"/>
</dbReference>
<dbReference type="SUPFAM" id="SSF52121">
    <property type="entry name" value="Lumazine synthase"/>
    <property type="match status" value="1"/>
</dbReference>
<reference key="1">
    <citation type="submission" date="2008-02" db="EMBL/GenBank/DDBJ databases">
        <title>Complete sequence of Haemophilus somnus 2336.</title>
        <authorList>
            <consortium name="US DOE Joint Genome Institute"/>
            <person name="Siddaramappa S."/>
            <person name="Duncan A.J."/>
            <person name="Challacombe J.F."/>
            <person name="Rainey D."/>
            <person name="Gillaspy A.F."/>
            <person name="Carson M."/>
            <person name="Gipson J."/>
            <person name="Gipson M."/>
            <person name="Bruce D."/>
            <person name="Detter J.C."/>
            <person name="Han C.S."/>
            <person name="Land M."/>
            <person name="Tapia R."/>
            <person name="Thompson L.S."/>
            <person name="Orvis J."/>
            <person name="Zaitshik J."/>
            <person name="Barnes G."/>
            <person name="Brettin T.S."/>
            <person name="Dyer D.W."/>
            <person name="Inzana T.J."/>
        </authorList>
    </citation>
    <scope>NUCLEOTIDE SEQUENCE [LARGE SCALE GENOMIC DNA]</scope>
    <source>
        <strain>2336</strain>
    </source>
</reference>
<proteinExistence type="inferred from homology"/>
<accession>B0UU22</accession>
<gene>
    <name evidence="1" type="primary">ribH</name>
    <name type="ordered locus">HSM_1299</name>
</gene>
<evidence type="ECO:0000255" key="1">
    <source>
        <dbReference type="HAMAP-Rule" id="MF_00178"/>
    </source>
</evidence>
<keyword id="KW-0686">Riboflavin biosynthesis</keyword>
<keyword id="KW-0808">Transferase</keyword>
<protein>
    <recommendedName>
        <fullName evidence="1">6,7-dimethyl-8-ribityllumazine synthase</fullName>
        <shortName evidence="1">DMRL synthase</shortName>
        <shortName evidence="1">LS</shortName>
        <shortName evidence="1">Lumazine synthase</shortName>
        <ecNumber evidence="1">2.5.1.78</ecNumber>
    </recommendedName>
</protein>
<name>RISB_HISS2</name>
<organism>
    <name type="scientific">Histophilus somni (strain 2336)</name>
    <name type="common">Haemophilus somnus</name>
    <dbReference type="NCBI Taxonomy" id="228400"/>
    <lineage>
        <taxon>Bacteria</taxon>
        <taxon>Pseudomonadati</taxon>
        <taxon>Pseudomonadota</taxon>
        <taxon>Gammaproteobacteria</taxon>
        <taxon>Pasteurellales</taxon>
        <taxon>Pasteurellaceae</taxon>
        <taxon>Histophilus</taxon>
    </lineage>
</organism>
<sequence>MKVLEGIVTAPNAKIAVVIARFNSFINESLLEGALDALKRIGQVKDENITLVRVPGAYELPLIARRLADSKKYDAIVALGTVIRGGTAHFEYVAGEASSGLGQVAMQAEIPVAFGVLTTENIEQAIERAGTKAGNKGAEAALVALEMVNLLAQIDKA</sequence>
<comment type="function">
    <text evidence="1">Catalyzes the formation of 6,7-dimethyl-8-ribityllumazine by condensation of 5-amino-6-(D-ribitylamino)uracil with 3,4-dihydroxy-2-butanone 4-phosphate. This is the penultimate step in the biosynthesis of riboflavin.</text>
</comment>
<comment type="catalytic activity">
    <reaction evidence="1">
        <text>(2S)-2-hydroxy-3-oxobutyl phosphate + 5-amino-6-(D-ribitylamino)uracil = 6,7-dimethyl-8-(1-D-ribityl)lumazine + phosphate + 2 H2O + H(+)</text>
        <dbReference type="Rhea" id="RHEA:26152"/>
        <dbReference type="ChEBI" id="CHEBI:15377"/>
        <dbReference type="ChEBI" id="CHEBI:15378"/>
        <dbReference type="ChEBI" id="CHEBI:15934"/>
        <dbReference type="ChEBI" id="CHEBI:43474"/>
        <dbReference type="ChEBI" id="CHEBI:58201"/>
        <dbReference type="ChEBI" id="CHEBI:58830"/>
        <dbReference type="EC" id="2.5.1.78"/>
    </reaction>
</comment>
<comment type="pathway">
    <text evidence="1">Cofactor biosynthesis; riboflavin biosynthesis; riboflavin from 2-hydroxy-3-oxobutyl phosphate and 5-amino-6-(D-ribitylamino)uracil: step 1/2.</text>
</comment>
<comment type="subunit">
    <text evidence="1">Forms an icosahedral capsid composed of 60 subunits, arranged as a dodecamer of pentamers.</text>
</comment>
<comment type="similarity">
    <text evidence="1">Belongs to the DMRL synthase family.</text>
</comment>